<keyword id="KW-0067">ATP-binding</keyword>
<keyword id="KW-0963">Cytoplasm</keyword>
<keyword id="KW-0324">Glycolysis</keyword>
<keyword id="KW-0418">Kinase</keyword>
<keyword id="KW-0460">Magnesium</keyword>
<keyword id="KW-0479">Metal-binding</keyword>
<keyword id="KW-0547">Nucleotide-binding</keyword>
<keyword id="KW-1185">Reference proteome</keyword>
<keyword id="KW-0808">Transferase</keyword>
<evidence type="ECO:0000250" key="1"/>
<evidence type="ECO:0000250" key="2">
    <source>
        <dbReference type="UniProtKB" id="P00558"/>
    </source>
</evidence>
<evidence type="ECO:0000250" key="3">
    <source>
        <dbReference type="UniProtKB" id="Q7SIB7"/>
    </source>
</evidence>
<evidence type="ECO:0000305" key="4"/>
<proteinExistence type="evidence at transcript level"/>
<gene>
    <name type="primary">PGK</name>
</gene>
<comment type="function">
    <text evidence="2">Catalyzes one of the two ATP producing reactions in the glycolytic pathway via the reversible conversion of 1,3-diphosphoglycerate to 3-phosphoglycerate. In addition to its role as a glycolytic enzyme, it seems that PGK-1 acts as a polymerase alpha cofactor protein (primer recognition protein). May play a role in sperm motility.</text>
</comment>
<comment type="catalytic activity">
    <reaction evidence="2">
        <text>(2R)-3-phosphoglycerate + ATP = (2R)-3-phospho-glyceroyl phosphate + ADP</text>
        <dbReference type="Rhea" id="RHEA:14801"/>
        <dbReference type="ChEBI" id="CHEBI:30616"/>
        <dbReference type="ChEBI" id="CHEBI:57604"/>
        <dbReference type="ChEBI" id="CHEBI:58272"/>
        <dbReference type="ChEBI" id="CHEBI:456216"/>
        <dbReference type="EC" id="2.7.2.3"/>
    </reaction>
</comment>
<comment type="cofactor">
    <cofactor evidence="2">
        <name>Mg(2+)</name>
        <dbReference type="ChEBI" id="CHEBI:18420"/>
    </cofactor>
</comment>
<comment type="pathway">
    <text evidence="2">Carbohydrate degradation; glycolysis; pyruvate from D-glyceraldehyde 3-phosphate: step 2/5.</text>
</comment>
<comment type="subunit">
    <text evidence="1">Monomer.</text>
</comment>
<comment type="subcellular location">
    <subcellularLocation>
        <location evidence="1">Cytoplasm</location>
    </subcellularLocation>
</comment>
<comment type="similarity">
    <text evidence="4">Belongs to the phosphoglycerate kinase family.</text>
</comment>
<sequence>MSLSNKLTLDKVDVKGKRVVMRVDFNVPMKDHKITNNQRIKAAVPTIKHCLDHGAKSVVLMSHLGRPDGVPMPDKFSFSPVAVELKALLGREVSFLKDCVGPEVEKACANPANGSVILLENLRFHVEEEGKGKDASGNKIKADAAKVEAFRASLSKLGDVYVNDAFGTAHRAHSSMVGVHLPQKAAGFLMKKELDYFAKALESPERPFLAILGGAKVQDKIQLISNMLDKVNEMIIGGGMAFTFLKVLNNMQIGNSLFDEEGSKIVKDLMAKAEKNGVKITLPVDFITADKFDEHAQTGEATVASGIPAGWMGLDCGPESVKKFVEVVGRAKQIVWNGPVGVFEWDKFSKGTKALMDKVVEVTGKGCITIIGGGDTATCCAKWNTEDKVSHVSTGGGASLELLEGKVLPGVDALSSV</sequence>
<accession>P51903</accession>
<feature type="initiator methionine" description="Removed" evidence="1">
    <location>
        <position position="1"/>
    </location>
</feature>
<feature type="chain" id="PRO_0000145841" description="Phosphoglycerate kinase">
    <location>
        <begin position="2"/>
        <end position="417"/>
    </location>
</feature>
<feature type="binding site" evidence="2">
    <location>
        <position position="23"/>
    </location>
    <ligand>
        <name>(2R)-3-phosphoglycerate</name>
        <dbReference type="ChEBI" id="CHEBI:58272"/>
    </ligand>
</feature>
<feature type="binding site" evidence="3">
    <location>
        <position position="24"/>
    </location>
    <ligand>
        <name>(2R)-3-phosphoglycerate</name>
        <dbReference type="ChEBI" id="CHEBI:58272"/>
    </ligand>
</feature>
<feature type="binding site" evidence="2">
    <location>
        <position position="25"/>
    </location>
    <ligand>
        <name>(2R)-3-phosphoglycerate</name>
        <dbReference type="ChEBI" id="CHEBI:58272"/>
    </ligand>
</feature>
<feature type="binding site" evidence="3">
    <location>
        <position position="26"/>
    </location>
    <ligand>
        <name>(2R)-3-phosphoglycerate</name>
        <dbReference type="ChEBI" id="CHEBI:58272"/>
    </ligand>
</feature>
<feature type="binding site" evidence="2">
    <location>
        <position position="38"/>
    </location>
    <ligand>
        <name>(2R)-3-phosphoglycerate</name>
        <dbReference type="ChEBI" id="CHEBI:58272"/>
    </ligand>
</feature>
<feature type="binding site" evidence="3">
    <location>
        <position position="39"/>
    </location>
    <ligand>
        <name>(2R)-3-phosphoglycerate</name>
        <dbReference type="ChEBI" id="CHEBI:58272"/>
    </ligand>
</feature>
<feature type="binding site" evidence="2">
    <location>
        <position position="62"/>
    </location>
    <ligand>
        <name>(2R)-3-phosphoglycerate</name>
        <dbReference type="ChEBI" id="CHEBI:58272"/>
    </ligand>
</feature>
<feature type="binding site" evidence="3">
    <location>
        <position position="63"/>
    </location>
    <ligand>
        <name>(2R)-3-phosphoglycerate</name>
        <dbReference type="ChEBI" id="CHEBI:58272"/>
    </ligand>
</feature>
<feature type="binding site" evidence="2">
    <location>
        <position position="65"/>
    </location>
    <ligand>
        <name>(2R)-3-phosphoglycerate</name>
        <dbReference type="ChEBI" id="CHEBI:58272"/>
    </ligand>
</feature>
<feature type="binding site" evidence="3">
    <location>
        <position position="66"/>
    </location>
    <ligand>
        <name>(2R)-3-phosphoglycerate</name>
        <dbReference type="ChEBI" id="CHEBI:58272"/>
    </ligand>
</feature>
<feature type="binding site" evidence="2">
    <location>
        <position position="122"/>
    </location>
    <ligand>
        <name>(2R)-3-phosphoglycerate</name>
        <dbReference type="ChEBI" id="CHEBI:58272"/>
    </ligand>
</feature>
<feature type="binding site" evidence="3">
    <location>
        <position position="123"/>
    </location>
    <ligand>
        <name>(2R)-3-phosphoglycerate</name>
        <dbReference type="ChEBI" id="CHEBI:58272"/>
    </ligand>
</feature>
<feature type="binding site" evidence="2">
    <location>
        <position position="170"/>
    </location>
    <ligand>
        <name>(2R)-3-phosphoglycerate</name>
        <dbReference type="ChEBI" id="CHEBI:58272"/>
    </ligand>
</feature>
<feature type="binding site" evidence="3">
    <location>
        <position position="171"/>
    </location>
    <ligand>
        <name>(2R)-3-phosphoglycerate</name>
        <dbReference type="ChEBI" id="CHEBI:58272"/>
    </ligand>
</feature>
<feature type="binding site" evidence="2">
    <location>
        <position position="214"/>
    </location>
    <ligand>
        <name>ADP</name>
        <dbReference type="ChEBI" id="CHEBI:456216"/>
    </ligand>
</feature>
<feature type="binding site" evidence="2">
    <location>
        <position position="214"/>
    </location>
    <ligand>
        <name>CDP</name>
        <dbReference type="ChEBI" id="CHEBI:58069"/>
    </ligand>
</feature>
<feature type="binding site" evidence="3">
    <location>
        <position position="215"/>
    </location>
    <ligand>
        <name>AMP</name>
        <dbReference type="ChEBI" id="CHEBI:456215"/>
    </ligand>
</feature>
<feature type="binding site" evidence="3">
    <location>
        <position position="215"/>
    </location>
    <ligand>
        <name>ATP</name>
        <dbReference type="ChEBI" id="CHEBI:30616"/>
    </ligand>
</feature>
<feature type="binding site" evidence="2">
    <location>
        <position position="215"/>
    </location>
    <ligand>
        <name>Mg(2+)</name>
        <dbReference type="ChEBI" id="CHEBI:18420"/>
    </ligand>
</feature>
<feature type="binding site" evidence="3">
    <location>
        <position position="216"/>
    </location>
    <ligand>
        <name>AMP</name>
        <dbReference type="ChEBI" id="CHEBI:456215"/>
    </ligand>
</feature>
<feature type="binding site" evidence="2">
    <location>
        <position position="219"/>
    </location>
    <ligand>
        <name>CDP</name>
        <dbReference type="ChEBI" id="CHEBI:58069"/>
    </ligand>
</feature>
<feature type="binding site" evidence="2">
    <location>
        <position position="219"/>
    </location>
    <ligand>
        <name>Mg(2+)</name>
        <dbReference type="ChEBI" id="CHEBI:18420"/>
    </ligand>
</feature>
<feature type="binding site" evidence="3">
    <location>
        <position position="220"/>
    </location>
    <ligand>
        <name>AMP</name>
        <dbReference type="ChEBI" id="CHEBI:456215"/>
    </ligand>
</feature>
<feature type="binding site" evidence="3">
    <location>
        <position position="220"/>
    </location>
    <ligand>
        <name>ATP</name>
        <dbReference type="ChEBI" id="CHEBI:30616"/>
    </ligand>
</feature>
<feature type="binding site" evidence="2">
    <location>
        <position position="238"/>
    </location>
    <ligand>
        <name>ADP</name>
        <dbReference type="ChEBI" id="CHEBI:456216"/>
    </ligand>
</feature>
<feature type="binding site" evidence="2">
    <location>
        <position position="238"/>
    </location>
    <ligand>
        <name>CDP</name>
        <dbReference type="ChEBI" id="CHEBI:58069"/>
    </ligand>
</feature>
<feature type="binding site" evidence="3">
    <location>
        <position position="239"/>
    </location>
    <ligand>
        <name>AMP</name>
        <dbReference type="ChEBI" id="CHEBI:456215"/>
    </ligand>
</feature>
<feature type="binding site" evidence="3">
    <location>
        <position position="239"/>
    </location>
    <ligand>
        <name>ATP</name>
        <dbReference type="ChEBI" id="CHEBI:30616"/>
    </ligand>
</feature>
<feature type="binding site" evidence="3">
    <location>
        <position position="313"/>
    </location>
    <ligand>
        <name>AMP</name>
        <dbReference type="ChEBI" id="CHEBI:456215"/>
    </ligand>
</feature>
<feature type="binding site" evidence="3">
    <location>
        <position position="313"/>
    </location>
    <ligand>
        <name>ATP</name>
        <dbReference type="ChEBI" id="CHEBI:30616"/>
    </ligand>
</feature>
<feature type="binding site" evidence="2">
    <location>
        <position position="338"/>
    </location>
    <ligand>
        <name>CDP</name>
        <dbReference type="ChEBI" id="CHEBI:58069"/>
    </ligand>
</feature>
<feature type="binding site" evidence="2">
    <location>
        <position position="340"/>
    </location>
    <ligand>
        <name>CDP</name>
        <dbReference type="ChEBI" id="CHEBI:58069"/>
    </ligand>
</feature>
<feature type="binding site" evidence="2">
    <location>
        <position position="343"/>
    </location>
    <ligand>
        <name>ADP</name>
        <dbReference type="ChEBI" id="CHEBI:456216"/>
    </ligand>
</feature>
<feature type="binding site" evidence="2">
    <location>
        <position position="343"/>
    </location>
    <ligand>
        <name>CDP</name>
        <dbReference type="ChEBI" id="CHEBI:58069"/>
    </ligand>
</feature>
<feature type="binding site" evidence="3">
    <location>
        <position position="344"/>
    </location>
    <ligand>
        <name>AMP</name>
        <dbReference type="ChEBI" id="CHEBI:456215"/>
    </ligand>
</feature>
<feature type="binding site" evidence="3">
    <location>
        <position position="344"/>
    </location>
    <ligand>
        <name>ATP</name>
        <dbReference type="ChEBI" id="CHEBI:30616"/>
    </ligand>
</feature>
<feature type="binding site" evidence="3">
    <location>
        <position position="375"/>
    </location>
    <ligand>
        <name>ATP</name>
        <dbReference type="ChEBI" id="CHEBI:30616"/>
    </ligand>
</feature>
<feature type="binding site" evidence="3">
    <location>
        <position position="375"/>
    </location>
    <ligand>
        <name>Mg(2+)</name>
        <dbReference type="ChEBI" id="CHEBI:18420"/>
    </ligand>
</feature>
<feature type="binding site" evidence="3">
    <location>
        <position position="376"/>
    </location>
    <ligand>
        <name>ATP</name>
        <dbReference type="ChEBI" id="CHEBI:30616"/>
    </ligand>
</feature>
<organism>
    <name type="scientific">Gallus gallus</name>
    <name type="common">Chicken</name>
    <dbReference type="NCBI Taxonomy" id="9031"/>
    <lineage>
        <taxon>Eukaryota</taxon>
        <taxon>Metazoa</taxon>
        <taxon>Chordata</taxon>
        <taxon>Craniata</taxon>
        <taxon>Vertebrata</taxon>
        <taxon>Euteleostomi</taxon>
        <taxon>Archelosauria</taxon>
        <taxon>Archosauria</taxon>
        <taxon>Dinosauria</taxon>
        <taxon>Saurischia</taxon>
        <taxon>Theropoda</taxon>
        <taxon>Coelurosauria</taxon>
        <taxon>Aves</taxon>
        <taxon>Neognathae</taxon>
        <taxon>Galloanserae</taxon>
        <taxon>Galliformes</taxon>
        <taxon>Phasianidae</taxon>
        <taxon>Phasianinae</taxon>
        <taxon>Gallus</taxon>
    </lineage>
</organism>
<dbReference type="EC" id="2.7.2.3" evidence="2"/>
<dbReference type="EMBL" id="L37101">
    <property type="protein sequence ID" value="AAC42219.1"/>
    <property type="molecule type" value="mRNA"/>
</dbReference>
<dbReference type="PIR" id="I50407">
    <property type="entry name" value="I50407"/>
</dbReference>
<dbReference type="RefSeq" id="NP_990316.1">
    <property type="nucleotide sequence ID" value="NM_204985.2"/>
</dbReference>
<dbReference type="SMR" id="P51903"/>
<dbReference type="BioGRID" id="676107">
    <property type="interactions" value="2"/>
</dbReference>
<dbReference type="FunCoup" id="P51903">
    <property type="interactions" value="1872"/>
</dbReference>
<dbReference type="IntAct" id="P51903">
    <property type="interactions" value="1"/>
</dbReference>
<dbReference type="STRING" id="9031.ENSGALP00000012878"/>
<dbReference type="PaxDb" id="9031-ENSGALP00000012878"/>
<dbReference type="GeneID" id="395833"/>
<dbReference type="KEGG" id="gga:395833"/>
<dbReference type="CTD" id="5232"/>
<dbReference type="VEuPathDB" id="HostDB:geneid_395833"/>
<dbReference type="eggNOG" id="KOG1367">
    <property type="taxonomic scope" value="Eukaryota"/>
</dbReference>
<dbReference type="InParanoid" id="P51903"/>
<dbReference type="OrthoDB" id="275353at2759"/>
<dbReference type="PhylomeDB" id="P51903"/>
<dbReference type="Reactome" id="R-GGA-352875">
    <property type="pathway name" value="Gluconeogenesis"/>
</dbReference>
<dbReference type="Reactome" id="R-GGA-352882">
    <property type="pathway name" value="Glycolysis"/>
</dbReference>
<dbReference type="SABIO-RK" id="P51903"/>
<dbReference type="UniPathway" id="UPA00109">
    <property type="reaction ID" value="UER00185"/>
</dbReference>
<dbReference type="PRO" id="PR:P51903"/>
<dbReference type="Proteomes" id="UP000000539">
    <property type="component" value="Unassembled WGS sequence"/>
</dbReference>
<dbReference type="GO" id="GO:0005694">
    <property type="term" value="C:chromosome"/>
    <property type="evidence" value="ECO:0000304"/>
    <property type="project" value="AgBase"/>
</dbReference>
<dbReference type="GO" id="GO:0005829">
    <property type="term" value="C:cytosol"/>
    <property type="evidence" value="ECO:0000318"/>
    <property type="project" value="GO_Central"/>
</dbReference>
<dbReference type="GO" id="GO:0043531">
    <property type="term" value="F:ADP binding"/>
    <property type="evidence" value="ECO:0000318"/>
    <property type="project" value="GO_Central"/>
</dbReference>
<dbReference type="GO" id="GO:0005524">
    <property type="term" value="F:ATP binding"/>
    <property type="evidence" value="ECO:0000250"/>
    <property type="project" value="UniProtKB"/>
</dbReference>
<dbReference type="GO" id="GO:0046872">
    <property type="term" value="F:metal ion binding"/>
    <property type="evidence" value="ECO:0007669"/>
    <property type="project" value="UniProtKB-KW"/>
</dbReference>
<dbReference type="GO" id="GO:0004618">
    <property type="term" value="F:phosphoglycerate kinase activity"/>
    <property type="evidence" value="ECO:0000250"/>
    <property type="project" value="UniProtKB"/>
</dbReference>
<dbReference type="GO" id="GO:0006094">
    <property type="term" value="P:gluconeogenesis"/>
    <property type="evidence" value="ECO:0000318"/>
    <property type="project" value="GO_Central"/>
</dbReference>
<dbReference type="GO" id="GO:0006096">
    <property type="term" value="P:glycolytic process"/>
    <property type="evidence" value="ECO:0000318"/>
    <property type="project" value="GO_Central"/>
</dbReference>
<dbReference type="CDD" id="cd00318">
    <property type="entry name" value="Phosphoglycerate_kinase"/>
    <property type="match status" value="1"/>
</dbReference>
<dbReference type="FunFam" id="3.40.50.1260:FF:000019">
    <property type="entry name" value="Phosphoglycerate kinase 1"/>
    <property type="match status" value="1"/>
</dbReference>
<dbReference type="FunFam" id="3.40.50.1260:FF:000031">
    <property type="entry name" value="Phosphoglycerate kinase 1"/>
    <property type="match status" value="1"/>
</dbReference>
<dbReference type="Gene3D" id="3.40.50.1260">
    <property type="entry name" value="Phosphoglycerate kinase, N-terminal domain"/>
    <property type="match status" value="3"/>
</dbReference>
<dbReference type="HAMAP" id="MF_00145">
    <property type="entry name" value="Phosphoglyc_kinase"/>
    <property type="match status" value="1"/>
</dbReference>
<dbReference type="InterPro" id="IPR001576">
    <property type="entry name" value="Phosphoglycerate_kinase"/>
</dbReference>
<dbReference type="InterPro" id="IPR015911">
    <property type="entry name" value="Phosphoglycerate_kinase_CS"/>
</dbReference>
<dbReference type="InterPro" id="IPR015824">
    <property type="entry name" value="Phosphoglycerate_kinase_N"/>
</dbReference>
<dbReference type="InterPro" id="IPR036043">
    <property type="entry name" value="Phosphoglycerate_kinase_sf"/>
</dbReference>
<dbReference type="PANTHER" id="PTHR11406">
    <property type="entry name" value="PHOSPHOGLYCERATE KINASE"/>
    <property type="match status" value="1"/>
</dbReference>
<dbReference type="PANTHER" id="PTHR11406:SF0">
    <property type="entry name" value="PHOSPHOGLYCERATE KINASE"/>
    <property type="match status" value="1"/>
</dbReference>
<dbReference type="Pfam" id="PF00162">
    <property type="entry name" value="PGK"/>
    <property type="match status" value="1"/>
</dbReference>
<dbReference type="PIRSF" id="PIRSF000724">
    <property type="entry name" value="Pgk"/>
    <property type="match status" value="1"/>
</dbReference>
<dbReference type="PRINTS" id="PR00477">
    <property type="entry name" value="PHGLYCKINASE"/>
</dbReference>
<dbReference type="SUPFAM" id="SSF53748">
    <property type="entry name" value="Phosphoglycerate kinase"/>
    <property type="match status" value="1"/>
</dbReference>
<dbReference type="PROSITE" id="PS00111">
    <property type="entry name" value="PGLYCERATE_KINASE"/>
    <property type="match status" value="1"/>
</dbReference>
<reference key="1">
    <citation type="journal article" date="1994" name="J. Hered.">
        <title>Localization of the chicken PgK gene to chromosome 4p by fluorescence in situ hybridization.</title>
        <authorList>
            <person name="Rauen K.A."/>
            <person name="le Ciel C.D."/>
            <person name="Abbott U.K."/>
            <person name="Hutchison N.J."/>
        </authorList>
    </citation>
    <scope>NUCLEOTIDE SEQUENCE [MRNA]</scope>
    <source>
        <tissue>Skeletal muscle</tissue>
    </source>
</reference>
<name>PGK_CHICK</name>
<protein>
    <recommendedName>
        <fullName>Phosphoglycerate kinase</fullName>
        <ecNumber evidence="2">2.7.2.3</ecNumber>
    </recommendedName>
</protein>